<keyword id="KW-0479">Metal-binding</keyword>
<keyword id="KW-0521">NADP</keyword>
<keyword id="KW-0560">Oxidoreductase</keyword>
<keyword id="KW-1185">Reference proteome</keyword>
<keyword id="KW-0862">Zinc</keyword>
<gene>
    <name type="primary">adh</name>
    <name type="ordered locus">MPN_564</name>
    <name type="ORF">MP278</name>
</gene>
<evidence type="ECO:0000250" key="1"/>
<evidence type="ECO:0000305" key="2"/>
<feature type="chain" id="PRO_0000160746" description="Probable NADP-dependent isopropanol dehydrogenase">
    <location>
        <begin position="1"/>
        <end position="351"/>
    </location>
</feature>
<feature type="binding site" evidence="1">
    <location>
        <position position="37"/>
    </location>
    <ligand>
        <name>Zn(2+)</name>
        <dbReference type="ChEBI" id="CHEBI:29105"/>
        <note>catalytic</note>
    </ligand>
</feature>
<feature type="binding site" evidence="1">
    <location>
        <position position="59"/>
    </location>
    <ligand>
        <name>Zn(2+)</name>
        <dbReference type="ChEBI" id="CHEBI:29105"/>
        <note>catalytic</note>
    </ligand>
</feature>
<feature type="binding site" evidence="1">
    <location>
        <position position="60"/>
    </location>
    <ligand>
        <name>Zn(2+)</name>
        <dbReference type="ChEBI" id="CHEBI:29105"/>
        <note>catalytic</note>
    </ligand>
</feature>
<feature type="binding site" evidence="1">
    <location>
        <position position="150"/>
    </location>
    <ligand>
        <name>Zn(2+)</name>
        <dbReference type="ChEBI" id="CHEBI:29105"/>
        <note>catalytic</note>
    </ligand>
</feature>
<feature type="binding site" evidence="1">
    <location>
        <begin position="175"/>
        <end position="178"/>
    </location>
    <ligand>
        <name>NADP(+)</name>
        <dbReference type="ChEBI" id="CHEBI:58349"/>
    </ligand>
</feature>
<feature type="binding site" evidence="1">
    <location>
        <begin position="198"/>
        <end position="200"/>
    </location>
    <ligand>
        <name>NADP(+)</name>
        <dbReference type="ChEBI" id="CHEBI:58349"/>
    </ligand>
</feature>
<feature type="binding site" evidence="1">
    <location>
        <begin position="265"/>
        <end position="267"/>
    </location>
    <ligand>
        <name>NADP(+)</name>
        <dbReference type="ChEBI" id="CHEBI:58349"/>
    </ligand>
</feature>
<feature type="binding site" evidence="1">
    <location>
        <position position="340"/>
    </location>
    <ligand>
        <name>NADP(+)</name>
        <dbReference type="ChEBI" id="CHEBI:58349"/>
    </ligand>
</feature>
<proteinExistence type="inferred from homology"/>
<organism>
    <name type="scientific">Mycoplasma pneumoniae (strain ATCC 29342 / M129 / Subtype 1)</name>
    <name type="common">Mycoplasmoides pneumoniae</name>
    <dbReference type="NCBI Taxonomy" id="272634"/>
    <lineage>
        <taxon>Bacteria</taxon>
        <taxon>Bacillati</taxon>
        <taxon>Mycoplasmatota</taxon>
        <taxon>Mycoplasmoidales</taxon>
        <taxon>Mycoplasmoidaceae</taxon>
        <taxon>Mycoplasmoides</taxon>
    </lineage>
</organism>
<dbReference type="EC" id="1.1.1.80"/>
<dbReference type="EMBL" id="U00089">
    <property type="protein sequence ID" value="AAB95926.1"/>
    <property type="molecule type" value="Genomic_DNA"/>
</dbReference>
<dbReference type="PIR" id="S73604">
    <property type="entry name" value="S73604"/>
</dbReference>
<dbReference type="RefSeq" id="NP_110253.1">
    <property type="nucleotide sequence ID" value="NC_000912.1"/>
</dbReference>
<dbReference type="RefSeq" id="WP_010874921.1">
    <property type="nucleotide sequence ID" value="NC_000912.1"/>
</dbReference>
<dbReference type="SMR" id="P75214"/>
<dbReference type="IntAct" id="P75214">
    <property type="interactions" value="1"/>
</dbReference>
<dbReference type="STRING" id="272634.MPN_564"/>
<dbReference type="EnsemblBacteria" id="AAB95926">
    <property type="protein sequence ID" value="AAB95926"/>
    <property type="gene ID" value="MPN_564"/>
</dbReference>
<dbReference type="KEGG" id="mpn:MPN_564"/>
<dbReference type="PATRIC" id="fig|272634.6.peg.626"/>
<dbReference type="HOGENOM" id="CLU_026673_11_3_14"/>
<dbReference type="OrthoDB" id="9769198at2"/>
<dbReference type="BioCyc" id="MPNE272634:G1GJ3-925-MONOMER"/>
<dbReference type="Proteomes" id="UP000000808">
    <property type="component" value="Chromosome"/>
</dbReference>
<dbReference type="GO" id="GO:0050009">
    <property type="term" value="F:isopropanol dehydrogenase (NADP+) activity"/>
    <property type="evidence" value="ECO:0007669"/>
    <property type="project" value="UniProtKB-EC"/>
</dbReference>
<dbReference type="GO" id="GO:0008270">
    <property type="term" value="F:zinc ion binding"/>
    <property type="evidence" value="ECO:0007669"/>
    <property type="project" value="InterPro"/>
</dbReference>
<dbReference type="CDD" id="cd08285">
    <property type="entry name" value="NADP_ADH"/>
    <property type="match status" value="1"/>
</dbReference>
<dbReference type="Gene3D" id="3.90.180.10">
    <property type="entry name" value="Medium-chain alcohol dehydrogenases, catalytic domain"/>
    <property type="match status" value="1"/>
</dbReference>
<dbReference type="Gene3D" id="3.40.50.720">
    <property type="entry name" value="NAD(P)-binding Rossmann-like Domain"/>
    <property type="match status" value="1"/>
</dbReference>
<dbReference type="InterPro" id="IPR013149">
    <property type="entry name" value="ADH-like_C"/>
</dbReference>
<dbReference type="InterPro" id="IPR013154">
    <property type="entry name" value="ADH-like_N"/>
</dbReference>
<dbReference type="InterPro" id="IPR002328">
    <property type="entry name" value="ADH_Zn_CS"/>
</dbReference>
<dbReference type="InterPro" id="IPR011032">
    <property type="entry name" value="GroES-like_sf"/>
</dbReference>
<dbReference type="InterPro" id="IPR036291">
    <property type="entry name" value="NAD(P)-bd_dom_sf"/>
</dbReference>
<dbReference type="InterPro" id="IPR020843">
    <property type="entry name" value="PKS_ER"/>
</dbReference>
<dbReference type="PANTHER" id="PTHR42813:SF4">
    <property type="entry name" value="NADP-DEPENDENT ISOPROPANOL DEHYDROGENASE"/>
    <property type="match status" value="1"/>
</dbReference>
<dbReference type="PANTHER" id="PTHR42813">
    <property type="entry name" value="ZINC-TYPE ALCOHOL DEHYDROGENASE-LIKE"/>
    <property type="match status" value="1"/>
</dbReference>
<dbReference type="Pfam" id="PF08240">
    <property type="entry name" value="ADH_N"/>
    <property type="match status" value="1"/>
</dbReference>
<dbReference type="Pfam" id="PF00107">
    <property type="entry name" value="ADH_zinc_N"/>
    <property type="match status" value="1"/>
</dbReference>
<dbReference type="SMART" id="SM00829">
    <property type="entry name" value="PKS_ER"/>
    <property type="match status" value="1"/>
</dbReference>
<dbReference type="SUPFAM" id="SSF50129">
    <property type="entry name" value="GroES-like"/>
    <property type="match status" value="1"/>
</dbReference>
<dbReference type="SUPFAM" id="SSF51735">
    <property type="entry name" value="NAD(P)-binding Rossmann-fold domains"/>
    <property type="match status" value="1"/>
</dbReference>
<dbReference type="PROSITE" id="PS00059">
    <property type="entry name" value="ADH_ZINC"/>
    <property type="match status" value="1"/>
</dbReference>
<comment type="function">
    <text evidence="1">Alcohol dehydrogenase with a preference for medium chain secondary alcohols, such as 2-butanol and isopropanol. Has very low activity with primary alcohols, such as ethanol. Under physiological conditions, the enzyme reduces aldehydes and 2-ketones to produce secondary alcohols. Is also active with acetaldehyde and propionaldehyde (By similarity).</text>
</comment>
<comment type="catalytic activity">
    <reaction>
        <text>propan-2-ol + NADP(+) = acetone + NADPH + H(+)</text>
        <dbReference type="Rhea" id="RHEA:21792"/>
        <dbReference type="ChEBI" id="CHEBI:15347"/>
        <dbReference type="ChEBI" id="CHEBI:15378"/>
        <dbReference type="ChEBI" id="CHEBI:17824"/>
        <dbReference type="ChEBI" id="CHEBI:57783"/>
        <dbReference type="ChEBI" id="CHEBI:58349"/>
        <dbReference type="EC" id="1.1.1.80"/>
    </reaction>
</comment>
<comment type="cofactor">
    <cofactor evidence="1">
        <name>Zn(2+)</name>
        <dbReference type="ChEBI" id="CHEBI:29105"/>
    </cofactor>
    <text evidence="1">Binds 1 zinc ion per subunit.</text>
</comment>
<comment type="similarity">
    <text evidence="2">Belongs to the zinc-containing alcohol dehydrogenase family.</text>
</comment>
<protein>
    <recommendedName>
        <fullName>Probable NADP-dependent isopropanol dehydrogenase</fullName>
        <ecNumber>1.1.1.80</ecNumber>
    </recommendedName>
</protein>
<accession>P75214</accession>
<reference key="1">
    <citation type="journal article" date="1996" name="Nucleic Acids Res.">
        <title>Complete sequence analysis of the genome of the bacterium Mycoplasma pneumoniae.</title>
        <authorList>
            <person name="Himmelreich R."/>
            <person name="Hilbert H."/>
            <person name="Plagens H."/>
            <person name="Pirkl E."/>
            <person name="Li B.-C."/>
            <person name="Herrmann R."/>
        </authorList>
    </citation>
    <scope>NUCLEOTIDE SEQUENCE [LARGE SCALE GENOMIC DNA]</scope>
    <source>
        <strain>ATCC 29342 / M129 / Subtype 1</strain>
    </source>
</reference>
<sequence>MKAYAMLKIGATGWIEKPRPVCGPNDAIIRPLAVAPCTSDVHTVWEGGIGERHNMVLGHEGCGVVDEVGSEVKSFKVGDRVLVAAITPEWNSVNAQAGYPMHSGGMLGGWKFSNVKDGMFAEYFHVNDAEGNLALMPEGMDLADACMLSDMIPTGFHANELADIQYGVALSFFCAGPVGLMAIAGAALKGAGRIIVVDSRPDIVEIAKAYGATDYIDFKKVSVVDEILKWTNNEGVEKVLISGGGSTILETAIKVLRPGGKIGNVNYFGAGEFLTIPRVEWGVGMAHKAIHGGLMLGGRLRLEKLARLIMTKKLDPSKMITHRFKGFEHIEEALFLMKDKPKDLIKSVVIF</sequence>
<name>ADH_MYCPN</name>